<feature type="chain" id="PRO_0000128840" description="4-hydroxy-3-methylbut-2-enyl diphosphate reductase">
    <location>
        <begin position="1"/>
        <end position="299"/>
    </location>
</feature>
<feature type="active site" description="Proton donor" evidence="1">
    <location>
        <position position="140"/>
    </location>
</feature>
<feature type="binding site" evidence="1">
    <location>
        <position position="12"/>
    </location>
    <ligand>
        <name>[4Fe-4S] cluster</name>
        <dbReference type="ChEBI" id="CHEBI:49883"/>
    </ligand>
</feature>
<feature type="binding site" evidence="1">
    <location>
        <position position="42"/>
    </location>
    <ligand>
        <name>(2E)-4-hydroxy-3-methylbut-2-enyl diphosphate</name>
        <dbReference type="ChEBI" id="CHEBI:128753"/>
    </ligand>
</feature>
<feature type="binding site" evidence="1">
    <location>
        <position position="42"/>
    </location>
    <ligand>
        <name>dimethylallyl diphosphate</name>
        <dbReference type="ChEBI" id="CHEBI:57623"/>
    </ligand>
</feature>
<feature type="binding site" evidence="1">
    <location>
        <position position="42"/>
    </location>
    <ligand>
        <name>isopentenyl diphosphate</name>
        <dbReference type="ChEBI" id="CHEBI:128769"/>
    </ligand>
</feature>
<feature type="binding site" evidence="1">
    <location>
        <position position="88"/>
    </location>
    <ligand>
        <name>(2E)-4-hydroxy-3-methylbut-2-enyl diphosphate</name>
        <dbReference type="ChEBI" id="CHEBI:128753"/>
    </ligand>
</feature>
<feature type="binding site" evidence="1">
    <location>
        <position position="88"/>
    </location>
    <ligand>
        <name>dimethylallyl diphosphate</name>
        <dbReference type="ChEBI" id="CHEBI:57623"/>
    </ligand>
</feature>
<feature type="binding site" evidence="1">
    <location>
        <position position="88"/>
    </location>
    <ligand>
        <name>isopentenyl diphosphate</name>
        <dbReference type="ChEBI" id="CHEBI:128769"/>
    </ligand>
</feature>
<feature type="binding site" evidence="1">
    <location>
        <position position="110"/>
    </location>
    <ligand>
        <name>[4Fe-4S] cluster</name>
        <dbReference type="ChEBI" id="CHEBI:49883"/>
    </ligand>
</feature>
<feature type="binding site" evidence="1">
    <location>
        <position position="138"/>
    </location>
    <ligand>
        <name>(2E)-4-hydroxy-3-methylbut-2-enyl diphosphate</name>
        <dbReference type="ChEBI" id="CHEBI:128753"/>
    </ligand>
</feature>
<feature type="binding site" evidence="1">
    <location>
        <position position="138"/>
    </location>
    <ligand>
        <name>dimethylallyl diphosphate</name>
        <dbReference type="ChEBI" id="CHEBI:57623"/>
    </ligand>
</feature>
<feature type="binding site" evidence="1">
    <location>
        <position position="138"/>
    </location>
    <ligand>
        <name>isopentenyl diphosphate</name>
        <dbReference type="ChEBI" id="CHEBI:128769"/>
    </ligand>
</feature>
<feature type="binding site" evidence="1">
    <location>
        <position position="177"/>
    </location>
    <ligand>
        <name>(2E)-4-hydroxy-3-methylbut-2-enyl diphosphate</name>
        <dbReference type="ChEBI" id="CHEBI:128753"/>
    </ligand>
</feature>
<feature type="binding site" evidence="1">
    <location>
        <position position="205"/>
    </location>
    <ligand>
        <name>[4Fe-4S] cluster</name>
        <dbReference type="ChEBI" id="CHEBI:49883"/>
    </ligand>
</feature>
<feature type="binding site" evidence="1">
    <location>
        <position position="233"/>
    </location>
    <ligand>
        <name>(2E)-4-hydroxy-3-methylbut-2-enyl diphosphate</name>
        <dbReference type="ChEBI" id="CHEBI:128753"/>
    </ligand>
</feature>
<feature type="binding site" evidence="1">
    <location>
        <position position="233"/>
    </location>
    <ligand>
        <name>dimethylallyl diphosphate</name>
        <dbReference type="ChEBI" id="CHEBI:57623"/>
    </ligand>
</feature>
<feature type="binding site" evidence="1">
    <location>
        <position position="233"/>
    </location>
    <ligand>
        <name>isopentenyl diphosphate</name>
        <dbReference type="ChEBI" id="CHEBI:128769"/>
    </ligand>
</feature>
<feature type="binding site" evidence="1">
    <location>
        <position position="235"/>
    </location>
    <ligand>
        <name>(2E)-4-hydroxy-3-methylbut-2-enyl diphosphate</name>
        <dbReference type="ChEBI" id="CHEBI:128753"/>
    </ligand>
</feature>
<feature type="binding site" evidence="1">
    <location>
        <position position="235"/>
    </location>
    <ligand>
        <name>dimethylallyl diphosphate</name>
        <dbReference type="ChEBI" id="CHEBI:57623"/>
    </ligand>
</feature>
<feature type="binding site" evidence="1">
    <location>
        <position position="235"/>
    </location>
    <ligand>
        <name>isopentenyl diphosphate</name>
        <dbReference type="ChEBI" id="CHEBI:128769"/>
    </ligand>
</feature>
<feature type="binding site" evidence="1">
    <location>
        <position position="277"/>
    </location>
    <ligand>
        <name>(2E)-4-hydroxy-3-methylbut-2-enyl diphosphate</name>
        <dbReference type="ChEBI" id="CHEBI:128753"/>
    </ligand>
</feature>
<feature type="binding site" evidence="1">
    <location>
        <position position="277"/>
    </location>
    <ligand>
        <name>dimethylallyl diphosphate</name>
        <dbReference type="ChEBI" id="CHEBI:57623"/>
    </ligand>
</feature>
<feature type="binding site" evidence="1">
    <location>
        <position position="277"/>
    </location>
    <ligand>
        <name>isopentenyl diphosphate</name>
        <dbReference type="ChEBI" id="CHEBI:128769"/>
    </ligand>
</feature>
<proteinExistence type="inferred from homology"/>
<protein>
    <recommendedName>
        <fullName evidence="1">4-hydroxy-3-methylbut-2-enyl diphosphate reductase</fullName>
        <shortName evidence="1">HMBPP reductase</shortName>
        <ecNumber evidence="1">1.17.7.4</ecNumber>
    </recommendedName>
</protein>
<name>ISPH_MALP2</name>
<sequence length="299" mass="34190">MKIIKITPRGFCKGVVDAYATCKKIAKLYPNHEKYLIGWLVHNKEIIKELEELGIQTKDDKNHSRSEIIDSIEIKDKNNPPIVIFSAHGTDQKTIDKAREKGLVVFDTTCIYVTKTHDLIKEKIEQGYQIFYIGVNNHPETISTLSIDKSIILIETVNDIENIRTESEKPIFVTNQTTISIYEFEEITETLKSKYKNIEFKNDICNAAKDRQDAVINMPSEVDLLLVVGDIKSNNSKKLVEIGIKKQIESHLIWNTKNIKDEWFINKKCLAITSGCSTPTWLANYVIIFLEKKLGTAND</sequence>
<organism>
    <name type="scientific">Malacoplasma penetrans (strain HF-2)</name>
    <name type="common">Mycoplasma penetrans</name>
    <dbReference type="NCBI Taxonomy" id="272633"/>
    <lineage>
        <taxon>Bacteria</taxon>
        <taxon>Bacillati</taxon>
        <taxon>Mycoplasmatota</taxon>
        <taxon>Mycoplasmoidales</taxon>
        <taxon>Mycoplasmoidaceae</taxon>
        <taxon>Malacoplasma</taxon>
    </lineage>
</organism>
<dbReference type="EC" id="1.17.7.4" evidence="1"/>
<dbReference type="EMBL" id="BA000026">
    <property type="protein sequence ID" value="BAC43925.1"/>
    <property type="molecule type" value="Genomic_DNA"/>
</dbReference>
<dbReference type="RefSeq" id="WP_011076961.1">
    <property type="nucleotide sequence ID" value="NC_004432.1"/>
</dbReference>
<dbReference type="SMR" id="Q8EWR9"/>
<dbReference type="FunCoup" id="Q8EWR9">
    <property type="interactions" value="149"/>
</dbReference>
<dbReference type="STRING" id="272633.gene:10731227"/>
<dbReference type="KEGG" id="mpe:MYPE1330"/>
<dbReference type="eggNOG" id="COG0761">
    <property type="taxonomic scope" value="Bacteria"/>
</dbReference>
<dbReference type="HOGENOM" id="CLU_027486_0_0_14"/>
<dbReference type="InParanoid" id="Q8EWR9"/>
<dbReference type="UniPathway" id="UPA00056">
    <property type="reaction ID" value="UER00097"/>
</dbReference>
<dbReference type="UniPathway" id="UPA00059">
    <property type="reaction ID" value="UER00105"/>
</dbReference>
<dbReference type="Proteomes" id="UP000002522">
    <property type="component" value="Chromosome"/>
</dbReference>
<dbReference type="GO" id="GO:0051539">
    <property type="term" value="F:4 iron, 4 sulfur cluster binding"/>
    <property type="evidence" value="ECO:0007669"/>
    <property type="project" value="UniProtKB-UniRule"/>
</dbReference>
<dbReference type="GO" id="GO:0051745">
    <property type="term" value="F:4-hydroxy-3-methylbut-2-enyl diphosphate reductase activity"/>
    <property type="evidence" value="ECO:0007669"/>
    <property type="project" value="UniProtKB-UniRule"/>
</dbReference>
<dbReference type="GO" id="GO:0046872">
    <property type="term" value="F:metal ion binding"/>
    <property type="evidence" value="ECO:0007669"/>
    <property type="project" value="UniProtKB-KW"/>
</dbReference>
<dbReference type="GO" id="GO:0050992">
    <property type="term" value="P:dimethylallyl diphosphate biosynthetic process"/>
    <property type="evidence" value="ECO:0007669"/>
    <property type="project" value="UniProtKB-UniRule"/>
</dbReference>
<dbReference type="GO" id="GO:0019288">
    <property type="term" value="P:isopentenyl diphosphate biosynthetic process, methylerythritol 4-phosphate pathway"/>
    <property type="evidence" value="ECO:0007669"/>
    <property type="project" value="UniProtKB-UniRule"/>
</dbReference>
<dbReference type="GO" id="GO:0016114">
    <property type="term" value="P:terpenoid biosynthetic process"/>
    <property type="evidence" value="ECO:0007669"/>
    <property type="project" value="UniProtKB-UniRule"/>
</dbReference>
<dbReference type="CDD" id="cd13944">
    <property type="entry name" value="lytB_ispH"/>
    <property type="match status" value="1"/>
</dbReference>
<dbReference type="Gene3D" id="3.40.50.11270">
    <property type="match status" value="1"/>
</dbReference>
<dbReference type="Gene3D" id="3.40.1010.20">
    <property type="entry name" value="4-hydroxy-3-methylbut-2-enyl diphosphate reductase, catalytic domain"/>
    <property type="match status" value="2"/>
</dbReference>
<dbReference type="HAMAP" id="MF_00191">
    <property type="entry name" value="IspH"/>
    <property type="match status" value="1"/>
</dbReference>
<dbReference type="InterPro" id="IPR003451">
    <property type="entry name" value="LytB/IspH"/>
</dbReference>
<dbReference type="NCBIfam" id="TIGR00216">
    <property type="entry name" value="ispH_lytB"/>
    <property type="match status" value="1"/>
</dbReference>
<dbReference type="PANTHER" id="PTHR30426">
    <property type="entry name" value="4-HYDROXY-3-METHYLBUT-2-ENYL DIPHOSPHATE REDUCTASE"/>
    <property type="match status" value="1"/>
</dbReference>
<dbReference type="PANTHER" id="PTHR30426:SF0">
    <property type="entry name" value="4-HYDROXY-3-METHYLBUT-2-ENYL DIPHOSPHATE REDUCTASE"/>
    <property type="match status" value="1"/>
</dbReference>
<dbReference type="Pfam" id="PF02401">
    <property type="entry name" value="LYTB"/>
    <property type="match status" value="1"/>
</dbReference>
<comment type="function">
    <text evidence="1">Catalyzes the conversion of 1-hydroxy-2-methyl-2-(E)-butenyl 4-diphosphate (HMBPP) into a mixture of isopentenyl diphosphate (IPP) and dimethylallyl diphosphate (DMAPP). Acts in the terminal step of the DOXP/MEP pathway for isoprenoid precursor biosynthesis.</text>
</comment>
<comment type="catalytic activity">
    <reaction evidence="1">
        <text>isopentenyl diphosphate + 2 oxidized [2Fe-2S]-[ferredoxin] + H2O = (2E)-4-hydroxy-3-methylbut-2-enyl diphosphate + 2 reduced [2Fe-2S]-[ferredoxin] + 2 H(+)</text>
        <dbReference type="Rhea" id="RHEA:24488"/>
        <dbReference type="Rhea" id="RHEA-COMP:10000"/>
        <dbReference type="Rhea" id="RHEA-COMP:10001"/>
        <dbReference type="ChEBI" id="CHEBI:15377"/>
        <dbReference type="ChEBI" id="CHEBI:15378"/>
        <dbReference type="ChEBI" id="CHEBI:33737"/>
        <dbReference type="ChEBI" id="CHEBI:33738"/>
        <dbReference type="ChEBI" id="CHEBI:128753"/>
        <dbReference type="ChEBI" id="CHEBI:128769"/>
        <dbReference type="EC" id="1.17.7.4"/>
    </reaction>
</comment>
<comment type="catalytic activity">
    <reaction evidence="1">
        <text>dimethylallyl diphosphate + 2 oxidized [2Fe-2S]-[ferredoxin] + H2O = (2E)-4-hydroxy-3-methylbut-2-enyl diphosphate + 2 reduced [2Fe-2S]-[ferredoxin] + 2 H(+)</text>
        <dbReference type="Rhea" id="RHEA:24825"/>
        <dbReference type="Rhea" id="RHEA-COMP:10000"/>
        <dbReference type="Rhea" id="RHEA-COMP:10001"/>
        <dbReference type="ChEBI" id="CHEBI:15377"/>
        <dbReference type="ChEBI" id="CHEBI:15378"/>
        <dbReference type="ChEBI" id="CHEBI:33737"/>
        <dbReference type="ChEBI" id="CHEBI:33738"/>
        <dbReference type="ChEBI" id="CHEBI:57623"/>
        <dbReference type="ChEBI" id="CHEBI:128753"/>
        <dbReference type="EC" id="1.17.7.4"/>
    </reaction>
</comment>
<comment type="cofactor">
    <cofactor evidence="1">
        <name>[4Fe-4S] cluster</name>
        <dbReference type="ChEBI" id="CHEBI:49883"/>
    </cofactor>
    <text evidence="1">Binds 1 [4Fe-4S] cluster per subunit.</text>
</comment>
<comment type="pathway">
    <text evidence="1">Isoprenoid biosynthesis; dimethylallyl diphosphate biosynthesis; dimethylallyl diphosphate from (2E)-4-hydroxy-3-methylbutenyl diphosphate: step 1/1.</text>
</comment>
<comment type="pathway">
    <text evidence="1">Isoprenoid biosynthesis; isopentenyl diphosphate biosynthesis via DXP pathway; isopentenyl diphosphate from 1-deoxy-D-xylulose 5-phosphate: step 6/6.</text>
</comment>
<comment type="similarity">
    <text evidence="1">Belongs to the IspH family.</text>
</comment>
<accession>Q8EWR9</accession>
<evidence type="ECO:0000255" key="1">
    <source>
        <dbReference type="HAMAP-Rule" id="MF_00191"/>
    </source>
</evidence>
<keyword id="KW-0004">4Fe-4S</keyword>
<keyword id="KW-0408">Iron</keyword>
<keyword id="KW-0411">Iron-sulfur</keyword>
<keyword id="KW-0414">Isoprene biosynthesis</keyword>
<keyword id="KW-0479">Metal-binding</keyword>
<keyword id="KW-0560">Oxidoreductase</keyword>
<keyword id="KW-1185">Reference proteome</keyword>
<reference key="1">
    <citation type="journal article" date="2002" name="Nucleic Acids Res.">
        <title>The complete genomic sequence of Mycoplasma penetrans, an intracellular bacterial pathogen in humans.</title>
        <authorList>
            <person name="Sasaki Y."/>
            <person name="Ishikawa J."/>
            <person name="Yamashita A."/>
            <person name="Oshima K."/>
            <person name="Kenri T."/>
            <person name="Furuya K."/>
            <person name="Yoshino C."/>
            <person name="Horino A."/>
            <person name="Shiba T."/>
            <person name="Sasaki T."/>
            <person name="Hattori M."/>
        </authorList>
    </citation>
    <scope>NUCLEOTIDE SEQUENCE [LARGE SCALE GENOMIC DNA]</scope>
    <source>
        <strain>HF-2</strain>
    </source>
</reference>
<gene>
    <name evidence="1" type="primary">ispH</name>
    <name type="ordered locus">MYPE1330</name>
</gene>